<evidence type="ECO:0000250" key="1"/>
<evidence type="ECO:0000255" key="2"/>
<evidence type="ECO:0000305" key="3"/>
<keyword id="KW-0150">Chloroplast</keyword>
<keyword id="KW-0472">Membrane</keyword>
<keyword id="KW-0934">Plastid</keyword>
<keyword id="KW-0653">Protein transport</keyword>
<keyword id="KW-0793">Thylakoid</keyword>
<keyword id="KW-0809">Transit peptide</keyword>
<keyword id="KW-0811">Translocation</keyword>
<keyword id="KW-0812">Transmembrane</keyword>
<keyword id="KW-1133">Transmembrane helix</keyword>
<keyword id="KW-0813">Transport</keyword>
<reference key="1">
    <citation type="journal article" date="1999" name="J. Cell Biol.">
        <title>Component specificity for the thylakoidal Sec and Delta pH-dependent protein transport pathways.</title>
        <authorList>
            <person name="Mori M."/>
            <person name="Summer E.J."/>
            <person name="Ma X."/>
            <person name="Cline K."/>
        </authorList>
    </citation>
    <scope>NUCLEOTIDE SEQUENCE [MRNA]</scope>
    <source>
        <tissue>Seed</tissue>
    </source>
</reference>
<feature type="transit peptide" description="Chloroplast" evidence="2">
    <location>
        <begin position="1"/>
        <end status="unknown"/>
    </location>
</feature>
<feature type="chain" id="PRO_0000031997" description="Preprotein translocase subunit SECY, chloroplastic">
    <location>
        <begin status="unknown"/>
        <end position="527"/>
    </location>
</feature>
<feature type="transmembrane region" description="Helical" evidence="2">
    <location>
        <begin position="120"/>
        <end position="140"/>
    </location>
</feature>
<feature type="transmembrane region" description="Helical" evidence="2">
    <location>
        <begin position="170"/>
        <end position="190"/>
    </location>
</feature>
<feature type="transmembrane region" description="Helical" evidence="2">
    <location>
        <begin position="219"/>
        <end position="239"/>
    </location>
</feature>
<feature type="transmembrane region" description="Helical" evidence="2">
    <location>
        <begin position="246"/>
        <end position="266"/>
    </location>
</feature>
<feature type="transmembrane region" description="Helical" evidence="2">
    <location>
        <begin position="273"/>
        <end position="293"/>
    </location>
</feature>
<feature type="transmembrane region" description="Helical" evidence="2">
    <location>
        <begin position="306"/>
        <end position="326"/>
    </location>
</feature>
<feature type="transmembrane region" description="Helical" evidence="2">
    <location>
        <begin position="360"/>
        <end position="380"/>
    </location>
</feature>
<feature type="transmembrane region" description="Helical" evidence="2">
    <location>
        <begin position="393"/>
        <end position="413"/>
    </location>
</feature>
<feature type="transmembrane region" description="Helical" evidence="2">
    <location>
        <begin position="458"/>
        <end position="478"/>
    </location>
</feature>
<feature type="transmembrane region" description="Helical" evidence="2">
    <location>
        <begin position="480"/>
        <end position="500"/>
    </location>
</feature>
<protein>
    <recommendedName>
        <fullName>Preprotein translocase subunit SECY, chloroplastic</fullName>
    </recommendedName>
    <alternativeName>
        <fullName>CpSecY</fullName>
    </alternativeName>
</protein>
<organism>
    <name type="scientific">Pisum sativum</name>
    <name type="common">Garden pea</name>
    <name type="synonym">Lathyrus oleraceus</name>
    <dbReference type="NCBI Taxonomy" id="3888"/>
    <lineage>
        <taxon>Eukaryota</taxon>
        <taxon>Viridiplantae</taxon>
        <taxon>Streptophyta</taxon>
        <taxon>Embryophyta</taxon>
        <taxon>Tracheophyta</taxon>
        <taxon>Spermatophyta</taxon>
        <taxon>Magnoliopsida</taxon>
        <taxon>eudicotyledons</taxon>
        <taxon>Gunneridae</taxon>
        <taxon>Pentapetalae</taxon>
        <taxon>rosids</taxon>
        <taxon>fabids</taxon>
        <taxon>Fabales</taxon>
        <taxon>Fabaceae</taxon>
        <taxon>Papilionoideae</taxon>
        <taxon>50 kb inversion clade</taxon>
        <taxon>NPAAA clade</taxon>
        <taxon>Hologalegina</taxon>
        <taxon>IRL clade</taxon>
        <taxon>Fabeae</taxon>
        <taxon>Pisum</taxon>
    </lineage>
</organism>
<accession>Q9XQU4</accession>
<name>SECY_PEA</name>
<dbReference type="EMBL" id="AF144684">
    <property type="protein sequence ID" value="AAD33936.1"/>
    <property type="molecule type" value="mRNA"/>
</dbReference>
<dbReference type="SMR" id="Q9XQU4"/>
<dbReference type="EnsemblPlants" id="Psat1g025280.1">
    <property type="protein sequence ID" value="Psat1g025280.1.cds"/>
    <property type="gene ID" value="Psat1g025280"/>
</dbReference>
<dbReference type="Gramene" id="Psat1g025280.1">
    <property type="protein sequence ID" value="Psat1g025280.1.cds"/>
    <property type="gene ID" value="Psat1g025280"/>
</dbReference>
<dbReference type="OrthoDB" id="361383at2759"/>
<dbReference type="GO" id="GO:0009535">
    <property type="term" value="C:chloroplast thylakoid membrane"/>
    <property type="evidence" value="ECO:0007669"/>
    <property type="project" value="UniProtKB-SubCell"/>
</dbReference>
<dbReference type="GO" id="GO:0015031">
    <property type="term" value="P:protein transport"/>
    <property type="evidence" value="ECO:0007669"/>
    <property type="project" value="UniProtKB-KW"/>
</dbReference>
<dbReference type="FunFam" id="1.10.3370.10:FF:000003">
    <property type="entry name" value="Preprotein translocase subunit SECY, chloroplastic"/>
    <property type="match status" value="1"/>
</dbReference>
<dbReference type="Gene3D" id="1.10.3370.10">
    <property type="entry name" value="SecY subunit domain"/>
    <property type="match status" value="1"/>
</dbReference>
<dbReference type="HAMAP" id="MF_01465">
    <property type="entry name" value="SecY"/>
    <property type="match status" value="1"/>
</dbReference>
<dbReference type="InterPro" id="IPR026593">
    <property type="entry name" value="SecY"/>
</dbReference>
<dbReference type="InterPro" id="IPR002208">
    <property type="entry name" value="SecY/SEC61-alpha"/>
</dbReference>
<dbReference type="InterPro" id="IPR030659">
    <property type="entry name" value="SecY_CS"/>
</dbReference>
<dbReference type="InterPro" id="IPR023201">
    <property type="entry name" value="SecY_dom_sf"/>
</dbReference>
<dbReference type="NCBIfam" id="TIGR00967">
    <property type="entry name" value="3a0501s007"/>
    <property type="match status" value="1"/>
</dbReference>
<dbReference type="PANTHER" id="PTHR10906">
    <property type="entry name" value="SECY/SEC61-ALPHA FAMILY MEMBER"/>
    <property type="match status" value="1"/>
</dbReference>
<dbReference type="Pfam" id="PF00344">
    <property type="entry name" value="SecY"/>
    <property type="match status" value="1"/>
</dbReference>
<dbReference type="PRINTS" id="PR00303">
    <property type="entry name" value="SECYTRNLCASE"/>
</dbReference>
<dbReference type="SUPFAM" id="SSF103491">
    <property type="entry name" value="Preprotein translocase SecY subunit"/>
    <property type="match status" value="1"/>
</dbReference>
<dbReference type="PROSITE" id="PS00755">
    <property type="entry name" value="SECY_1"/>
    <property type="match status" value="1"/>
</dbReference>
<dbReference type="PROSITE" id="PS00756">
    <property type="entry name" value="SECY_2"/>
    <property type="match status" value="1"/>
</dbReference>
<comment type="function">
    <text evidence="1">The central subunit of the protein translocation channel SecYE. Consists of two halves formed by TMs 1-5 and 6-10. These two domains form a lateral gate at the front which open onto the bilayer between TMs 2 and 7, and are clamped together by SecE at the back. The channel is closed by both a pore ring composed of hydrophobic SecY resides and a short helix (helix 2A) on the extracellular side of the membrane which forms a plug (By similarity).</text>
</comment>
<comment type="subunit">
    <text evidence="1">Component of the plastid Sec protein translocase complex, which is composed of at least SECY and SECE.</text>
</comment>
<comment type="subcellular location">
    <subcellularLocation>
        <location evidence="1">Plastid</location>
        <location evidence="1">Chloroplast thylakoid membrane</location>
        <topology evidence="1">Multi-pass membrane protein</topology>
    </subcellularLocation>
</comment>
<comment type="similarity">
    <text evidence="3">Belongs to the SecY/SEC61-alpha family.</text>
</comment>
<sequence>MLITVRDPSPTLRCSSLNRRLIPTKHNLSPRLLRSSFRQHNLSLRLRSSSSSNLYTSCDLANFDPLGINPDLSSSSTWRNLLTIFQTSSQKDKPRGVAAAIEDSSIDFGDFFNGPLPGKFLKLLGFLALSRLGVYIPLGGVNRDAFLGNLDQNSLLTTLDSFSGGGIGRLGICSLGIVPFINAQIVFQLLAQVYPKLQDLQKKEGEAGRKKLLQYTRYASVGFAIVQAIGQVLFLRPYANDFTTEWALTSVILLTLGSVFTTYIGEQITELKLGNGTSLLIFTNIISYLPASFGRTFSQAFSDANYVGLVTIIVSFFLLVLGIVYVQEAERKIPINYASRFTSKSGGIEKSAYLPFKVNSSGVMPIIFSTSSLALPGTLARFTGLSSLKTAAVALNPGGSFYLPFNILLIAFFNYYYTFLQLDPDDVSEQLKRQGASIPLVRPGKSTATFIKTVLSRISVLGSTFLAILAAGPAVVEQTAHLTAFRGFAGTSILILVGCATDTARKVRAEIISQKYKNIELYDFDKY</sequence>
<gene>
    <name type="primary">SECY</name>
</gene>
<proteinExistence type="evidence at transcript level"/>